<sequence length="133" mass="15154">MAKEFGRPQRVAQEMQKEIALILQREIKDPRLGMMTTVSGVEMSRDLAYAKVYVTFLNDKDEDAVKAGIKALQEASGFIRSLLGKAMRLRIVPELTFFYDNSLVEGMRMSNLVTSVVKHDEERRVNPDDSKED</sequence>
<feature type="chain" id="PRO_1000193257" description="Ribosome-binding factor A">
    <location>
        <begin position="1"/>
        <end position="133"/>
    </location>
</feature>
<evidence type="ECO:0000255" key="1">
    <source>
        <dbReference type="HAMAP-Rule" id="MF_00003"/>
    </source>
</evidence>
<name>RBFA_ECO7I</name>
<dbReference type="EMBL" id="CU928164">
    <property type="protein sequence ID" value="CAR19780.1"/>
    <property type="molecule type" value="Genomic_DNA"/>
</dbReference>
<dbReference type="RefSeq" id="WP_001040205.1">
    <property type="nucleotide sequence ID" value="NC_011750.1"/>
</dbReference>
<dbReference type="RefSeq" id="YP_002409567.1">
    <property type="nucleotide sequence ID" value="NC_011750.1"/>
</dbReference>
<dbReference type="SMR" id="B7NKN6"/>
<dbReference type="STRING" id="585057.ECIAI39_3664"/>
<dbReference type="GeneID" id="93778816"/>
<dbReference type="KEGG" id="ect:ECIAI39_3664"/>
<dbReference type="PATRIC" id="fig|585057.6.peg.3797"/>
<dbReference type="HOGENOM" id="CLU_089475_5_0_6"/>
<dbReference type="Proteomes" id="UP000000749">
    <property type="component" value="Chromosome"/>
</dbReference>
<dbReference type="GO" id="GO:0005829">
    <property type="term" value="C:cytosol"/>
    <property type="evidence" value="ECO:0007669"/>
    <property type="project" value="TreeGrafter"/>
</dbReference>
<dbReference type="GO" id="GO:0043024">
    <property type="term" value="F:ribosomal small subunit binding"/>
    <property type="evidence" value="ECO:0007669"/>
    <property type="project" value="TreeGrafter"/>
</dbReference>
<dbReference type="GO" id="GO:0030490">
    <property type="term" value="P:maturation of SSU-rRNA"/>
    <property type="evidence" value="ECO:0007669"/>
    <property type="project" value="UniProtKB-UniRule"/>
</dbReference>
<dbReference type="FunFam" id="3.30.300.20:FF:000007">
    <property type="entry name" value="Ribosome-binding factor A"/>
    <property type="match status" value="1"/>
</dbReference>
<dbReference type="Gene3D" id="3.30.300.20">
    <property type="match status" value="1"/>
</dbReference>
<dbReference type="HAMAP" id="MF_00003">
    <property type="entry name" value="RbfA"/>
    <property type="match status" value="1"/>
</dbReference>
<dbReference type="InterPro" id="IPR015946">
    <property type="entry name" value="KH_dom-like_a/b"/>
</dbReference>
<dbReference type="InterPro" id="IPR000238">
    <property type="entry name" value="RbfA"/>
</dbReference>
<dbReference type="InterPro" id="IPR023799">
    <property type="entry name" value="RbfA_dom_sf"/>
</dbReference>
<dbReference type="InterPro" id="IPR020053">
    <property type="entry name" value="Ribosome-bd_factorA_CS"/>
</dbReference>
<dbReference type="NCBIfam" id="TIGR00082">
    <property type="entry name" value="rbfA"/>
    <property type="match status" value="1"/>
</dbReference>
<dbReference type="PANTHER" id="PTHR33515">
    <property type="entry name" value="RIBOSOME-BINDING FACTOR A, CHLOROPLASTIC-RELATED"/>
    <property type="match status" value="1"/>
</dbReference>
<dbReference type="PANTHER" id="PTHR33515:SF1">
    <property type="entry name" value="RIBOSOME-BINDING FACTOR A, CHLOROPLASTIC-RELATED"/>
    <property type="match status" value="1"/>
</dbReference>
<dbReference type="Pfam" id="PF02033">
    <property type="entry name" value="RBFA"/>
    <property type="match status" value="1"/>
</dbReference>
<dbReference type="SUPFAM" id="SSF89919">
    <property type="entry name" value="Ribosome-binding factor A, RbfA"/>
    <property type="match status" value="1"/>
</dbReference>
<dbReference type="PROSITE" id="PS01319">
    <property type="entry name" value="RBFA"/>
    <property type="match status" value="1"/>
</dbReference>
<keyword id="KW-0963">Cytoplasm</keyword>
<keyword id="KW-0690">Ribosome biogenesis</keyword>
<protein>
    <recommendedName>
        <fullName evidence="1">Ribosome-binding factor A</fullName>
    </recommendedName>
</protein>
<gene>
    <name evidence="1" type="primary">rbfA</name>
    <name type="ordered locus">ECIAI39_3664</name>
</gene>
<comment type="function">
    <text evidence="1">One of several proteins that assist in the late maturation steps of the functional core of the 30S ribosomal subunit. Associates with free 30S ribosomal subunits (but not with 30S subunits that are part of 70S ribosomes or polysomes). Required for efficient processing of 16S rRNA. May interact with the 5'-terminal helix region of 16S rRNA.</text>
</comment>
<comment type="subunit">
    <text evidence="1">Monomer. Binds 30S ribosomal subunits, but not 50S ribosomal subunits or 70S ribosomes.</text>
</comment>
<comment type="subcellular location">
    <subcellularLocation>
        <location evidence="1">Cytoplasm</location>
    </subcellularLocation>
</comment>
<comment type="similarity">
    <text evidence="1">Belongs to the RbfA family.</text>
</comment>
<proteinExistence type="inferred from homology"/>
<accession>B7NKN6</accession>
<organism>
    <name type="scientific">Escherichia coli O7:K1 (strain IAI39 / ExPEC)</name>
    <dbReference type="NCBI Taxonomy" id="585057"/>
    <lineage>
        <taxon>Bacteria</taxon>
        <taxon>Pseudomonadati</taxon>
        <taxon>Pseudomonadota</taxon>
        <taxon>Gammaproteobacteria</taxon>
        <taxon>Enterobacterales</taxon>
        <taxon>Enterobacteriaceae</taxon>
        <taxon>Escherichia</taxon>
    </lineage>
</organism>
<reference key="1">
    <citation type="journal article" date="2009" name="PLoS Genet.">
        <title>Organised genome dynamics in the Escherichia coli species results in highly diverse adaptive paths.</title>
        <authorList>
            <person name="Touchon M."/>
            <person name="Hoede C."/>
            <person name="Tenaillon O."/>
            <person name="Barbe V."/>
            <person name="Baeriswyl S."/>
            <person name="Bidet P."/>
            <person name="Bingen E."/>
            <person name="Bonacorsi S."/>
            <person name="Bouchier C."/>
            <person name="Bouvet O."/>
            <person name="Calteau A."/>
            <person name="Chiapello H."/>
            <person name="Clermont O."/>
            <person name="Cruveiller S."/>
            <person name="Danchin A."/>
            <person name="Diard M."/>
            <person name="Dossat C."/>
            <person name="Karoui M.E."/>
            <person name="Frapy E."/>
            <person name="Garry L."/>
            <person name="Ghigo J.M."/>
            <person name="Gilles A.M."/>
            <person name="Johnson J."/>
            <person name="Le Bouguenec C."/>
            <person name="Lescat M."/>
            <person name="Mangenot S."/>
            <person name="Martinez-Jehanne V."/>
            <person name="Matic I."/>
            <person name="Nassif X."/>
            <person name="Oztas S."/>
            <person name="Petit M.A."/>
            <person name="Pichon C."/>
            <person name="Rouy Z."/>
            <person name="Ruf C.S."/>
            <person name="Schneider D."/>
            <person name="Tourret J."/>
            <person name="Vacherie B."/>
            <person name="Vallenet D."/>
            <person name="Medigue C."/>
            <person name="Rocha E.P.C."/>
            <person name="Denamur E."/>
        </authorList>
    </citation>
    <scope>NUCLEOTIDE SEQUENCE [LARGE SCALE GENOMIC DNA]</scope>
    <source>
        <strain>IAI39 / ExPEC</strain>
    </source>
</reference>